<keyword id="KW-0119">Carbohydrate metabolism</keyword>
<keyword id="KW-0325">Glycoprotein</keyword>
<keyword id="KW-0333">Golgi apparatus</keyword>
<keyword id="KW-0472">Membrane</keyword>
<keyword id="KW-1185">Reference proteome</keyword>
<keyword id="KW-0735">Signal-anchor</keyword>
<keyword id="KW-0808">Transferase</keyword>
<keyword id="KW-0812">Transmembrane</keyword>
<keyword id="KW-1133">Transmembrane helix</keyword>
<evidence type="ECO:0000250" key="1"/>
<evidence type="ECO:0000250" key="2">
    <source>
        <dbReference type="UniProtKB" id="Q92179"/>
    </source>
</evidence>
<evidence type="ECO:0000255" key="3"/>
<evidence type="ECO:0000269" key="4">
    <source>
    </source>
</evidence>
<evidence type="ECO:0000269" key="5">
    <source>
    </source>
</evidence>
<evidence type="ECO:0000303" key="6">
    <source>
    </source>
</evidence>
<evidence type="ECO:0000305" key="7"/>
<evidence type="ECO:0000305" key="8">
    <source>
    </source>
</evidence>
<sequence length="472" mass="53997">MEKGLALPQDFRDLVHSLKIRGRYVLFLAFVVIVFIFIEKENKIISRVSDKLKQIPHFVADANSTDPALLLSENASLLSLSELDSTFSHLRSRLHNLSLQLGVEPAMESQEAGAEKPSQQAGAGTRRHVLLMATTRTGSSFVGEFFNQQGNIFYLFEPLWHIERTVFFQQRGASAAGSALVYRDVLKQLLLCDLYVLEPFISPPPEDHLTQFLFRRGSSRSLCEDPVCTPFVKKVFEKYHCRNRRCGPLNVTLAGEACRRKDHVALKAVRIRQLEFLQPLVEDPRLDLRVIQLVRDPRAVLASRIVAFAGKYENWKKWLSEGQDQLSEDEVQRLRGNCESIRLSAELGLRQPAWLRGRYMLVRYEDVARRPLQKAREMYSFAGIPLTPQVEDWIQKNTQATRDSSDVYSTQKNSSEQFEKWRFSMPFKLAQVVQAACGPTMHLFGYKLARDAASLTNRSISLLEERGTFWVT</sequence>
<reference key="1">
    <citation type="journal article" date="1998" name="Glycobiology">
        <title>Mouse chondroitin 6-sulfotransferase: molecular cloning, characterization and chromosomal mapping.</title>
        <authorList>
            <person name="Uchimura K."/>
            <person name="Kadomatsu K."/>
            <person name="Fan Q.-W."/>
            <person name="Muramatsu H."/>
            <person name="Kurosawa N."/>
            <person name="Kaname T."/>
            <person name="Yamamura K."/>
            <person name="Fukuta M."/>
            <person name="Habuchi O."/>
            <person name="Muramatsu T."/>
        </authorList>
    </citation>
    <scope>NUCLEOTIDE SEQUENCE [MRNA]</scope>
    <scope>FUNCTION</scope>
    <scope>CATALYTIC ACTIVITY</scope>
    <scope>TISSUE SPECIFICITY</scope>
    <source>
        <strain>C57BL/6J</strain>
        <tissue>Spleen</tissue>
    </source>
</reference>
<reference key="2">
    <citation type="journal article" date="2002" name="J. Biol. Chem.">
        <title>Functional analysis of the chondroitin 6-sulfotransferase gene in relation to lymphocyte subpopulations, brain development, and oversulfated chondroitin sulfates.</title>
        <authorList>
            <person name="Uchimura K."/>
            <person name="Kadomatsu K."/>
            <person name="Nishimura H."/>
            <person name="Muramatsu H."/>
            <person name="Nakamura E."/>
            <person name="Kurosawa N."/>
            <person name="Habuchi O."/>
            <person name="El-Fasakhany F.M."/>
            <person name="Yoshikai Y."/>
            <person name="Muramatsu T."/>
        </authorList>
    </citation>
    <scope>NUCLEOTIDE SEQUENCE [GENOMIC DNA]</scope>
    <scope>DISRUPTION PHENOTYPE</scope>
    <scope>FUNCTION</scope>
    <scope>CATALYTIC ACTIVITY</scope>
</reference>
<reference key="3">
    <citation type="journal article" date="2004" name="Genome Res.">
        <title>The status, quality, and expansion of the NIH full-length cDNA project: the Mammalian Gene Collection (MGC).</title>
        <authorList>
            <consortium name="The MGC Project Team"/>
        </authorList>
    </citation>
    <scope>NUCLEOTIDE SEQUENCE [LARGE SCALE MRNA]</scope>
    <source>
        <tissue>Eye</tissue>
    </source>
</reference>
<gene>
    <name type="primary">Chst3</name>
    <name type="synonym">C6st</name>
    <name type="synonym">Gst0</name>
</gene>
<proteinExistence type="evidence at protein level"/>
<accession>O88199</accession>
<accession>Q794I5</accession>
<name>CHST3_MOUSE</name>
<dbReference type="EC" id="2.8.2.17" evidence="4 5"/>
<dbReference type="EC" id="2.8.2.21" evidence="4"/>
<dbReference type="EMBL" id="AB008937">
    <property type="protein sequence ID" value="BAA29054.1"/>
    <property type="molecule type" value="mRNA"/>
</dbReference>
<dbReference type="EMBL" id="AB008938">
    <property type="protein sequence ID" value="BAA29055.1"/>
    <property type="molecule type" value="mRNA"/>
</dbReference>
<dbReference type="EMBL" id="AB062109">
    <property type="protein sequence ID" value="BAB72166.1"/>
    <property type="molecule type" value="Genomic_DNA"/>
</dbReference>
<dbReference type="EMBL" id="BC055055">
    <property type="protein sequence ID" value="AAH55055.1"/>
    <property type="molecule type" value="mRNA"/>
</dbReference>
<dbReference type="CCDS" id="CCDS23871.2"/>
<dbReference type="RefSeq" id="NP_001393954.1">
    <property type="nucleotide sequence ID" value="NM_001407025.1"/>
</dbReference>
<dbReference type="RefSeq" id="NP_058083.3">
    <property type="nucleotide sequence ID" value="NM_016803.4"/>
</dbReference>
<dbReference type="BioGRID" id="207297">
    <property type="interactions" value="1"/>
</dbReference>
<dbReference type="FunCoup" id="O88199">
    <property type="interactions" value="617"/>
</dbReference>
<dbReference type="STRING" id="10090.ENSMUSP00000126281"/>
<dbReference type="GlyCosmos" id="O88199">
    <property type="glycosylation" value="6 sites, No reported glycans"/>
</dbReference>
<dbReference type="GlyGen" id="O88199">
    <property type="glycosylation" value="6 sites, 2 N-linked glycans (2 sites)"/>
</dbReference>
<dbReference type="PhosphoSitePlus" id="O88199"/>
<dbReference type="PaxDb" id="10090-ENSMUSP00000126281"/>
<dbReference type="ProteomicsDB" id="283837"/>
<dbReference type="Antibodypedia" id="29214">
    <property type="antibodies" value="178 antibodies from 29 providers"/>
</dbReference>
<dbReference type="DNASU" id="53374"/>
<dbReference type="Ensembl" id="ENSMUST00000068690.7">
    <property type="protein sequence ID" value="ENSMUSP00000065010.7"/>
    <property type="gene ID" value="ENSMUSG00000057337.15"/>
</dbReference>
<dbReference type="Ensembl" id="ENSMUST00000167915.3">
    <property type="protein sequence ID" value="ENSMUSP00000131532.2"/>
    <property type="gene ID" value="ENSMUSG00000057337.15"/>
</dbReference>
<dbReference type="GeneID" id="53374"/>
<dbReference type="KEGG" id="mmu:53374"/>
<dbReference type="AGR" id="MGI:1858224"/>
<dbReference type="CTD" id="9469"/>
<dbReference type="MGI" id="MGI:1858224">
    <property type="gene designation" value="Chst3"/>
</dbReference>
<dbReference type="VEuPathDB" id="HostDB:ENSMUSG00000057337"/>
<dbReference type="eggNOG" id="ENOG502QWEX">
    <property type="taxonomic scope" value="Eukaryota"/>
</dbReference>
<dbReference type="GeneTree" id="ENSGT00940000161045"/>
<dbReference type="HOGENOM" id="CLU_028381_3_2_1"/>
<dbReference type="InParanoid" id="O88199"/>
<dbReference type="OMA" id="KWRFGMP"/>
<dbReference type="PhylomeDB" id="O88199"/>
<dbReference type="BRENDA" id="2.8.2.17">
    <property type="organism ID" value="3474"/>
</dbReference>
<dbReference type="Reactome" id="R-MMU-2022870">
    <property type="pathway name" value="Chondroitin sulfate biosynthesis"/>
</dbReference>
<dbReference type="BioGRID-ORCS" id="53374">
    <property type="hits" value="3 hits in 77 CRISPR screens"/>
</dbReference>
<dbReference type="ChiTaRS" id="Chst3">
    <property type="organism name" value="mouse"/>
</dbReference>
<dbReference type="PRO" id="PR:O88199"/>
<dbReference type="Proteomes" id="UP000000589">
    <property type="component" value="Chromosome 10"/>
</dbReference>
<dbReference type="RNAct" id="O88199">
    <property type="molecule type" value="protein"/>
</dbReference>
<dbReference type="Bgee" id="ENSMUSG00000057337">
    <property type="expression patterns" value="Expressed in retinal neural layer and 57 other cell types or tissues"/>
</dbReference>
<dbReference type="ExpressionAtlas" id="O88199">
    <property type="expression patterns" value="baseline and differential"/>
</dbReference>
<dbReference type="GO" id="GO:0005794">
    <property type="term" value="C:Golgi apparatus"/>
    <property type="evidence" value="ECO:0000314"/>
    <property type="project" value="MGI"/>
</dbReference>
<dbReference type="GO" id="GO:0000139">
    <property type="term" value="C:Golgi membrane"/>
    <property type="evidence" value="ECO:0007669"/>
    <property type="project" value="UniProtKB-SubCell"/>
</dbReference>
<dbReference type="GO" id="GO:0008459">
    <property type="term" value="F:chondroitin 6-sulfotransferase activity"/>
    <property type="evidence" value="ECO:0000314"/>
    <property type="project" value="MGI"/>
</dbReference>
<dbReference type="GO" id="GO:0050698">
    <property type="term" value="F:proteoglycan sulfotransferase activity"/>
    <property type="evidence" value="ECO:0000315"/>
    <property type="project" value="MGI"/>
</dbReference>
<dbReference type="GO" id="GO:0005975">
    <property type="term" value="P:carbohydrate metabolic process"/>
    <property type="evidence" value="ECO:0007669"/>
    <property type="project" value="InterPro"/>
</dbReference>
<dbReference type="GO" id="GO:0050650">
    <property type="term" value="P:chondroitin sulfate proteoglycan biosynthetic process"/>
    <property type="evidence" value="ECO:0000314"/>
    <property type="project" value="MGI"/>
</dbReference>
<dbReference type="GO" id="GO:0043029">
    <property type="term" value="P:T cell homeostasis"/>
    <property type="evidence" value="ECO:0000315"/>
    <property type="project" value="MGI"/>
</dbReference>
<dbReference type="FunFam" id="3.40.50.300:FF:000938">
    <property type="entry name" value="Sulfotransferase"/>
    <property type="match status" value="1"/>
</dbReference>
<dbReference type="Gene3D" id="3.40.50.300">
    <property type="entry name" value="P-loop containing nucleotide triphosphate hydrolases"/>
    <property type="match status" value="1"/>
</dbReference>
<dbReference type="InterPro" id="IPR016469">
    <property type="entry name" value="Carbohydrate_sulfotransferase"/>
</dbReference>
<dbReference type="InterPro" id="IPR051135">
    <property type="entry name" value="Gal/GlcNAc/GalNAc_ST"/>
</dbReference>
<dbReference type="InterPro" id="IPR027417">
    <property type="entry name" value="P-loop_NTPase"/>
</dbReference>
<dbReference type="InterPro" id="IPR000863">
    <property type="entry name" value="Sulfotransferase_dom"/>
</dbReference>
<dbReference type="PANTHER" id="PTHR10704">
    <property type="entry name" value="CARBOHYDRATE SULFOTRANSFERASE"/>
    <property type="match status" value="1"/>
</dbReference>
<dbReference type="PANTHER" id="PTHR10704:SF60">
    <property type="entry name" value="CARBOHYDRATE SULFOTRANSFERASE 3"/>
    <property type="match status" value="1"/>
</dbReference>
<dbReference type="Pfam" id="PF00685">
    <property type="entry name" value="Sulfotransfer_1"/>
    <property type="match status" value="1"/>
</dbReference>
<dbReference type="PIRSF" id="PIRSF005883">
    <property type="entry name" value="Carbohydrate_sulfotransferase"/>
    <property type="match status" value="1"/>
</dbReference>
<dbReference type="SUPFAM" id="SSF52540">
    <property type="entry name" value="P-loop containing nucleoside triphosphate hydrolases"/>
    <property type="match status" value="1"/>
</dbReference>
<protein>
    <recommendedName>
        <fullName evidence="8">Carbohydrate sulfotransferase 3</fullName>
        <ecNumber evidence="4 5">2.8.2.17</ecNumber>
        <ecNumber evidence="4">2.8.2.21</ecNumber>
    </recommendedName>
    <alternativeName>
        <fullName>Chondroitin 6-O-sulfotransferase 1</fullName>
        <shortName>C6ST-1</shortName>
    </alternativeName>
    <alternativeName>
        <fullName evidence="6">Chondroitin 6-sulfotransferase</fullName>
        <shortName evidence="6">C6ST</shortName>
    </alternativeName>
    <alternativeName>
        <fullName>Galactose/N-acetylglucosamine/N-acetylglucosamine 6-O-sulfotransferase 0</fullName>
        <shortName>GST-0</shortName>
    </alternativeName>
</protein>
<feature type="chain" id="PRO_0000085189" description="Carbohydrate sulfotransferase 3">
    <location>
        <begin position="1"/>
        <end position="472"/>
    </location>
</feature>
<feature type="topological domain" description="Cytoplasmic" evidence="3">
    <location>
        <begin position="1"/>
        <end position="19"/>
    </location>
</feature>
<feature type="transmembrane region" description="Helical; Signal-anchor for type II membrane protein" evidence="3">
    <location>
        <begin position="20"/>
        <end position="38"/>
    </location>
</feature>
<feature type="topological domain" description="Lumenal" evidence="3">
    <location>
        <begin position="39"/>
        <end position="472"/>
    </location>
</feature>
<feature type="binding site" evidence="1">
    <location>
        <begin position="135"/>
        <end position="141"/>
    </location>
    <ligand>
        <name>3'-phosphoadenylyl sulfate</name>
        <dbReference type="ChEBI" id="CHEBI:58339"/>
    </ligand>
</feature>
<feature type="binding site" evidence="1">
    <location>
        <begin position="295"/>
        <end position="303"/>
    </location>
    <ligand>
        <name>3'-phosphoadenylyl sulfate</name>
        <dbReference type="ChEBI" id="CHEBI:58339"/>
    </ligand>
</feature>
<feature type="glycosylation site" description="N-linked (GlcNAc...) asparagine" evidence="3">
    <location>
        <position position="63"/>
    </location>
</feature>
<feature type="glycosylation site" description="N-linked (GlcNAc...) asparagine" evidence="3">
    <location>
        <position position="74"/>
    </location>
</feature>
<feature type="glycosylation site" description="N-linked (GlcNAc...) asparagine" evidence="3">
    <location>
        <position position="96"/>
    </location>
</feature>
<feature type="glycosylation site" description="N-linked (GlcNAc...) asparagine" evidence="3">
    <location>
        <position position="250"/>
    </location>
</feature>
<feature type="glycosylation site" description="N-linked (GlcNAc...) asparagine" evidence="3">
    <location>
        <position position="413"/>
    </location>
</feature>
<feature type="glycosylation site" description="N-linked (GlcNAc...) asparagine" evidence="3">
    <location>
        <position position="457"/>
    </location>
</feature>
<comment type="function">
    <text evidence="2 4 5 6">Sulfotransferase that utilizes 3'-phospho-5'-adenylyl sulfate (PAPS) as sulfonate donor to catalyze the transfer of sulfate to position 6 of the N-acetylgalactosamine (GalNAc) residue of chondroitin (PubMed:11696535, PubMed:9597547). Chondroitin sulfate constitutes the predominant proteoglycan present in cartilage and is distributed on the surfaces of many cells and extracellular matrices (PubMed:9597547). Catalyzes with a lower efficiency the sulfation of Gal residues of keratan sulfate, another glycosaminoglycan (PubMed:11696535). Can also catalyze the sulfation of the Gal residues in sialyl N-acetyllactosamine (sialyl LacNAc) oligosaccharides (By similarity). May play a role in the maintenance of naive T-lymphocytes in the spleen (PubMed:11696535).</text>
</comment>
<comment type="catalytic activity">
    <reaction evidence="4 5">
        <text>chondroitin beta-D-glucuronate + n 3'-phosphoadenylyl sulfate = chondroitin 6'-sulfate + n adenosine 3',5'-bisphosphate + n H(+)</text>
        <dbReference type="Rhea" id="RHEA:11108"/>
        <dbReference type="Rhea" id="RHEA-COMP:9827"/>
        <dbReference type="Rhea" id="RHEA-COMP:9828"/>
        <dbReference type="ChEBI" id="CHEBI:15378"/>
        <dbReference type="ChEBI" id="CHEBI:57652"/>
        <dbReference type="ChEBI" id="CHEBI:58339"/>
        <dbReference type="ChEBI" id="CHEBI:58343"/>
        <dbReference type="ChEBI" id="CHEBI:62065"/>
        <dbReference type="EC" id="2.8.2.17"/>
    </reaction>
    <physiologicalReaction direction="left-to-right" evidence="4">
        <dbReference type="Rhea" id="RHEA:11109"/>
    </physiologicalReaction>
</comment>
<comment type="catalytic activity">
    <reaction evidence="4">
        <text>3'-phosphoadenylyl sulfate + keratan = adenosine 3',5'-bisphosphate + keratan 6'-sulfate.</text>
        <dbReference type="EC" id="2.8.2.21"/>
    </reaction>
</comment>
<comment type="subcellular location">
    <subcellularLocation>
        <location evidence="1">Golgi apparatus membrane</location>
        <topology evidence="1">Single-pass type II membrane protein</topology>
    </subcellularLocation>
</comment>
<comment type="tissue specificity">
    <text evidence="5">Widely expressed. Highly expressed in spleen, lung, eye and stomach. Constitutively expressed at low level during the mid- to late-gestation period. Expressed in the brain in a temporally controlled manner: peaks at 2 weeks after birth in the cerebellum, but at 3 weeks in the cerebrum. Localizes to stromal cells in the bone marrow, and stromal cells in the marginal zone and red pulp of the spleen, but the sense probe did not.</text>
</comment>
<comment type="PTM">
    <text evidence="2">N-glycosylated.</text>
</comment>
<comment type="disruption phenotype">
    <text evidence="4">Mice are viable through adulthood. In their spleen the level of chondroitin 6'-sulfate is almost undetectable. In the spleen of 5-6 week-old mice, the number of CD62L(+)CD44(low) T-lymphocytes corresponding to naive T-lymphocytes is significantly decreased, whereas those in other secondary lymphoid organs are unchanged.</text>
</comment>
<comment type="similarity">
    <text evidence="7">Belongs to the sulfotransferase 1 family. Gal/GlcNAc/GalNAc subfamily.</text>
</comment>
<organism>
    <name type="scientific">Mus musculus</name>
    <name type="common">Mouse</name>
    <dbReference type="NCBI Taxonomy" id="10090"/>
    <lineage>
        <taxon>Eukaryota</taxon>
        <taxon>Metazoa</taxon>
        <taxon>Chordata</taxon>
        <taxon>Craniata</taxon>
        <taxon>Vertebrata</taxon>
        <taxon>Euteleostomi</taxon>
        <taxon>Mammalia</taxon>
        <taxon>Eutheria</taxon>
        <taxon>Euarchontoglires</taxon>
        <taxon>Glires</taxon>
        <taxon>Rodentia</taxon>
        <taxon>Myomorpha</taxon>
        <taxon>Muroidea</taxon>
        <taxon>Muridae</taxon>
        <taxon>Murinae</taxon>
        <taxon>Mus</taxon>
        <taxon>Mus</taxon>
    </lineage>
</organism>